<comment type="function">
    <text evidence="1">Polymerizes chitin, a structural polymer of the cell wall and septum, by transferring the sugar moiety of UDP-GlcNAc to the non-reducing end of the growing chitin polymer.</text>
</comment>
<comment type="catalytic activity">
    <reaction>
        <text>[(1-&gt;4)-N-acetyl-beta-D-glucosaminyl](n) + UDP-N-acetyl-alpha-D-glucosamine = [(1-&gt;4)-N-acetyl-beta-D-glucosaminyl](n+1) + UDP + H(+)</text>
        <dbReference type="Rhea" id="RHEA:16637"/>
        <dbReference type="Rhea" id="RHEA-COMP:9593"/>
        <dbReference type="Rhea" id="RHEA-COMP:9595"/>
        <dbReference type="ChEBI" id="CHEBI:15378"/>
        <dbReference type="ChEBI" id="CHEBI:17029"/>
        <dbReference type="ChEBI" id="CHEBI:57705"/>
        <dbReference type="ChEBI" id="CHEBI:58223"/>
        <dbReference type="EC" id="2.4.1.16"/>
    </reaction>
</comment>
<comment type="subcellular location">
    <subcellularLocation>
        <location evidence="1">Cell membrane</location>
        <topology evidence="1">Multi-pass membrane protein</topology>
    </subcellularLocation>
</comment>
<comment type="similarity">
    <text evidence="1">Belongs to the chitin synthase family. Class II subfamily.</text>
</comment>
<evidence type="ECO:0000305" key="1"/>
<proteinExistence type="inferred from homology"/>
<organism>
    <name type="scientific">Exophiala exophialae</name>
    <name type="common">Black yeast-like fungus</name>
    <name type="synonym">Phaeococcomyces exophialae</name>
    <dbReference type="NCBI Taxonomy" id="13202"/>
    <lineage>
        <taxon>Eukaryota</taxon>
        <taxon>Fungi</taxon>
        <taxon>Dikarya</taxon>
        <taxon>Ascomycota</taxon>
        <taxon>Pezizomycotina</taxon>
        <taxon>Eurotiomycetes</taxon>
        <taxon>Chaetothyriomycetidae</taxon>
        <taxon>Chaetothyriales</taxon>
        <taxon>Herpotrichiellaceae</taxon>
        <taxon>Exophiala</taxon>
    </lineage>
</organism>
<feature type="chain" id="PRO_0000193707" description="Chitin synthase 2">
    <location>
        <begin position="1" status="less than"/>
        <end position="189" status="greater than"/>
    </location>
</feature>
<feature type="non-terminal residue">
    <location>
        <position position="1"/>
    </location>
</feature>
<feature type="non-terminal residue">
    <location>
        <position position="189"/>
    </location>
</feature>
<sequence>EIEFTRTMHGIMRNISHFCSRTKSRTWGKDGWPKIVVCVIADGRQKVHPRTLNALAALGVYQDGIAKNVVNKKEVTAHVYEYTTQVSLDEGMKFKGAEKGIVPCQMIFCLKEQNKRKLNSHRWFFNAFGRALTPNVCILLDVGTKPDSKALYHLWKAFDQDSNVAGAAGEIKADKGKGWLGLLNPLVAS</sequence>
<protein>
    <recommendedName>
        <fullName>Chitin synthase 2</fullName>
        <ecNumber>2.4.1.16</ecNumber>
    </recommendedName>
    <alternativeName>
        <fullName>Chitin-UDP acetyl-glucosaminyl transferase 2</fullName>
    </alternativeName>
    <alternativeName>
        <fullName>Class-II chitin synthase 2</fullName>
    </alternativeName>
</protein>
<gene>
    <name type="primary">CHS2</name>
</gene>
<accession>P30591</accession>
<name>CHS2_EXOEX</name>
<reference key="1">
    <citation type="journal article" date="1992" name="Proc. Natl. Acad. Sci. U.S.A.">
        <title>Classification of fungal chitin synthases.</title>
        <authorList>
            <person name="Bowen A.R."/>
            <person name="Chen-Wu J.L.-P."/>
            <person name="Momany M."/>
            <person name="Young R."/>
            <person name="Szaniszlo P.J."/>
            <person name="Robbins P.W."/>
        </authorList>
    </citation>
    <scope>NUCLEOTIDE SEQUENCE [GENOMIC DNA]</scope>
</reference>
<keyword id="KW-1003">Cell membrane</keyword>
<keyword id="KW-0961">Cell wall biogenesis/degradation</keyword>
<keyword id="KW-0328">Glycosyltransferase</keyword>
<keyword id="KW-0472">Membrane</keyword>
<keyword id="KW-0808">Transferase</keyword>
<keyword id="KW-0812">Transmembrane</keyword>
<dbReference type="EC" id="2.4.1.16"/>
<dbReference type="EMBL" id="M82953">
    <property type="protein sequence ID" value="AAA33635.1"/>
    <property type="molecule type" value="Genomic_DNA"/>
</dbReference>
<dbReference type="PIR" id="H45188">
    <property type="entry name" value="H45188"/>
</dbReference>
<dbReference type="SMR" id="P30591"/>
<dbReference type="CAZy" id="GT2">
    <property type="family name" value="Glycosyltransferase Family 2"/>
</dbReference>
<dbReference type="GO" id="GO:0030428">
    <property type="term" value="C:cell septum"/>
    <property type="evidence" value="ECO:0007669"/>
    <property type="project" value="TreeGrafter"/>
</dbReference>
<dbReference type="GO" id="GO:0005886">
    <property type="term" value="C:plasma membrane"/>
    <property type="evidence" value="ECO:0007669"/>
    <property type="project" value="UniProtKB-SubCell"/>
</dbReference>
<dbReference type="GO" id="GO:0004100">
    <property type="term" value="F:chitin synthase activity"/>
    <property type="evidence" value="ECO:0007669"/>
    <property type="project" value="UniProtKB-EC"/>
</dbReference>
<dbReference type="GO" id="GO:0071555">
    <property type="term" value="P:cell wall organization"/>
    <property type="evidence" value="ECO:0007669"/>
    <property type="project" value="UniProtKB-KW"/>
</dbReference>
<dbReference type="GO" id="GO:0006031">
    <property type="term" value="P:chitin biosynthetic process"/>
    <property type="evidence" value="ECO:0007669"/>
    <property type="project" value="InterPro"/>
</dbReference>
<dbReference type="InterPro" id="IPR004835">
    <property type="entry name" value="Chitin_synth"/>
</dbReference>
<dbReference type="InterPro" id="IPR004834">
    <property type="entry name" value="Chitin_synth_fun"/>
</dbReference>
<dbReference type="PANTHER" id="PTHR22914">
    <property type="entry name" value="CHITIN SYNTHASE"/>
    <property type="match status" value="1"/>
</dbReference>
<dbReference type="PANTHER" id="PTHR22914:SF38">
    <property type="entry name" value="CHITIN SYNTHASE 2"/>
    <property type="match status" value="1"/>
</dbReference>
<dbReference type="Pfam" id="PF01644">
    <property type="entry name" value="Chitin_synth_1"/>
    <property type="match status" value="1"/>
</dbReference>